<accession>Q0SNZ5</accession>
<accession>G0IR13</accession>
<gene>
    <name evidence="1" type="primary">infA</name>
    <name type="ordered locus">BAPKO_0171</name>
    <name type="ordered locus">BafPKo_0166</name>
</gene>
<evidence type="ECO:0000255" key="1">
    <source>
        <dbReference type="HAMAP-Rule" id="MF_00075"/>
    </source>
</evidence>
<keyword id="KW-0963">Cytoplasm</keyword>
<keyword id="KW-0396">Initiation factor</keyword>
<keyword id="KW-0648">Protein biosynthesis</keyword>
<keyword id="KW-0694">RNA-binding</keyword>
<keyword id="KW-0699">rRNA-binding</keyword>
<reference key="1">
    <citation type="journal article" date="2006" name="BMC Genomics">
        <title>Comparative genome analysis: selection pressure on the Borrelia vls cassettes is essential for infectivity.</title>
        <authorList>
            <person name="Gloeckner G."/>
            <person name="Schulte-Spechtel U."/>
            <person name="Schilhabel M."/>
            <person name="Felder M."/>
            <person name="Suehnel J."/>
            <person name="Wilske B."/>
            <person name="Platzer M."/>
        </authorList>
    </citation>
    <scope>NUCLEOTIDE SEQUENCE [LARGE SCALE GENOMIC DNA]</scope>
    <source>
        <strain>PKo</strain>
    </source>
</reference>
<reference key="2">
    <citation type="journal article" date="2011" name="J. Bacteriol.">
        <title>Whole-genome sequences of two Borrelia afzelii and two Borrelia garinii Lyme disease agent isolates.</title>
        <authorList>
            <person name="Casjens S.R."/>
            <person name="Mongodin E.F."/>
            <person name="Qiu W.G."/>
            <person name="Dunn J.J."/>
            <person name="Luft B.J."/>
            <person name="Fraser-Liggett C.M."/>
            <person name="Schutzer S.E."/>
        </authorList>
    </citation>
    <scope>NUCLEOTIDE SEQUENCE [LARGE SCALE GENOMIC DNA]</scope>
    <source>
        <strain>PKo</strain>
    </source>
</reference>
<sequence>MDIKEEAIETEGIVKESLPNTMFRVELKNKHIVLAHLSGKMRKHFIKIVPGDKVKVELSPYDLTKGRIVYREK</sequence>
<name>IF1_BORAP</name>
<organism>
    <name type="scientific">Borreliella afzelii (strain PKo)</name>
    <name type="common">Borrelia afzelii</name>
    <dbReference type="NCBI Taxonomy" id="390236"/>
    <lineage>
        <taxon>Bacteria</taxon>
        <taxon>Pseudomonadati</taxon>
        <taxon>Spirochaetota</taxon>
        <taxon>Spirochaetia</taxon>
        <taxon>Spirochaetales</taxon>
        <taxon>Borreliaceae</taxon>
        <taxon>Borreliella</taxon>
    </lineage>
</organism>
<feature type="chain" id="PRO_0000263769" description="Translation initiation factor IF-1">
    <location>
        <begin position="1"/>
        <end position="73"/>
    </location>
</feature>
<feature type="domain" description="S1-like" evidence="1">
    <location>
        <begin position="1"/>
        <end position="73"/>
    </location>
</feature>
<protein>
    <recommendedName>
        <fullName evidence="1">Translation initiation factor IF-1</fullName>
    </recommendedName>
</protein>
<comment type="function">
    <text evidence="1">One of the essential components for the initiation of protein synthesis. Stabilizes the binding of IF-2 and IF-3 on the 30S subunit to which N-formylmethionyl-tRNA(fMet) subsequently binds. Helps modulate mRNA selection, yielding the 30S pre-initiation complex (PIC). Upon addition of the 50S ribosomal subunit IF-1, IF-2 and IF-3 are released leaving the mature 70S translation initiation complex.</text>
</comment>
<comment type="subunit">
    <text evidence="1">Component of the 30S ribosomal translation pre-initiation complex which assembles on the 30S ribosome in the order IF-2 and IF-3, IF-1 and N-formylmethionyl-tRNA(fMet); mRNA recruitment can occur at any time during PIC assembly.</text>
</comment>
<comment type="subcellular location">
    <subcellularLocation>
        <location evidence="1">Cytoplasm</location>
    </subcellularLocation>
</comment>
<comment type="similarity">
    <text evidence="1">Belongs to the IF-1 family.</text>
</comment>
<dbReference type="EMBL" id="CP000395">
    <property type="protein sequence ID" value="ABH01433.1"/>
    <property type="molecule type" value="Genomic_DNA"/>
</dbReference>
<dbReference type="EMBL" id="CP002933">
    <property type="protein sequence ID" value="AEL69399.1"/>
    <property type="molecule type" value="Genomic_DNA"/>
</dbReference>
<dbReference type="SMR" id="Q0SNZ5"/>
<dbReference type="STRING" id="29518.BLA32_03465"/>
<dbReference type="KEGG" id="baf:BAPKO_0171"/>
<dbReference type="KEGG" id="bafz:BafPKo_0166"/>
<dbReference type="PATRIC" id="fig|390236.22.peg.164"/>
<dbReference type="eggNOG" id="COG0361">
    <property type="taxonomic scope" value="Bacteria"/>
</dbReference>
<dbReference type="HOGENOM" id="CLU_151267_1_0_12"/>
<dbReference type="OrthoDB" id="9803250at2"/>
<dbReference type="Proteomes" id="UP000005216">
    <property type="component" value="Chromosome"/>
</dbReference>
<dbReference type="GO" id="GO:0005829">
    <property type="term" value="C:cytosol"/>
    <property type="evidence" value="ECO:0007669"/>
    <property type="project" value="TreeGrafter"/>
</dbReference>
<dbReference type="GO" id="GO:0043022">
    <property type="term" value="F:ribosome binding"/>
    <property type="evidence" value="ECO:0007669"/>
    <property type="project" value="UniProtKB-UniRule"/>
</dbReference>
<dbReference type="GO" id="GO:0019843">
    <property type="term" value="F:rRNA binding"/>
    <property type="evidence" value="ECO:0007669"/>
    <property type="project" value="UniProtKB-UniRule"/>
</dbReference>
<dbReference type="GO" id="GO:0003743">
    <property type="term" value="F:translation initiation factor activity"/>
    <property type="evidence" value="ECO:0007669"/>
    <property type="project" value="UniProtKB-UniRule"/>
</dbReference>
<dbReference type="CDD" id="cd04451">
    <property type="entry name" value="S1_IF1"/>
    <property type="match status" value="1"/>
</dbReference>
<dbReference type="FunFam" id="2.40.50.140:FF:000002">
    <property type="entry name" value="Translation initiation factor IF-1"/>
    <property type="match status" value="1"/>
</dbReference>
<dbReference type="Gene3D" id="2.40.50.140">
    <property type="entry name" value="Nucleic acid-binding proteins"/>
    <property type="match status" value="1"/>
</dbReference>
<dbReference type="HAMAP" id="MF_00075">
    <property type="entry name" value="IF_1"/>
    <property type="match status" value="1"/>
</dbReference>
<dbReference type="InterPro" id="IPR012340">
    <property type="entry name" value="NA-bd_OB-fold"/>
</dbReference>
<dbReference type="InterPro" id="IPR006196">
    <property type="entry name" value="RNA-binding_domain_S1_IF1"/>
</dbReference>
<dbReference type="InterPro" id="IPR003029">
    <property type="entry name" value="S1_domain"/>
</dbReference>
<dbReference type="InterPro" id="IPR004368">
    <property type="entry name" value="TIF_IF1"/>
</dbReference>
<dbReference type="NCBIfam" id="TIGR00008">
    <property type="entry name" value="infA"/>
    <property type="match status" value="1"/>
</dbReference>
<dbReference type="PANTHER" id="PTHR33370">
    <property type="entry name" value="TRANSLATION INITIATION FACTOR IF-1, CHLOROPLASTIC"/>
    <property type="match status" value="1"/>
</dbReference>
<dbReference type="PANTHER" id="PTHR33370:SF1">
    <property type="entry name" value="TRANSLATION INITIATION FACTOR IF-1, CHLOROPLASTIC"/>
    <property type="match status" value="1"/>
</dbReference>
<dbReference type="Pfam" id="PF01176">
    <property type="entry name" value="eIF-1a"/>
    <property type="match status" value="1"/>
</dbReference>
<dbReference type="SMART" id="SM00316">
    <property type="entry name" value="S1"/>
    <property type="match status" value="1"/>
</dbReference>
<dbReference type="SUPFAM" id="SSF50249">
    <property type="entry name" value="Nucleic acid-binding proteins"/>
    <property type="match status" value="1"/>
</dbReference>
<dbReference type="PROSITE" id="PS50832">
    <property type="entry name" value="S1_IF1_TYPE"/>
    <property type="match status" value="1"/>
</dbReference>
<proteinExistence type="inferred from homology"/>